<gene>
    <name type="primary">wrt-4</name>
    <name type="ORF">ZK678.5</name>
</gene>
<comment type="function">
    <text evidence="2">Intercellular signal essential for a variety of patterning events during development.</text>
</comment>
<comment type="subcellular location">
    <molecule>Warthog protein 4</molecule>
    <subcellularLocation>
        <location evidence="1">Secreted</location>
    </subcellularLocation>
    <subcellularLocation>
        <location evidence="1">Cell surface</location>
    </subcellularLocation>
    <text evidence="1">Also secreted in either cleaved or uncleaved form to mediate signaling to other cells.</text>
</comment>
<comment type="subcellular location">
    <molecule>Warthog protein 4 N-product</molecule>
    <subcellularLocation>
        <location evidence="1">Cell membrane</location>
        <topology evidence="1">Peripheral membrane protein</topology>
        <orientation evidence="1">Extracellular side</orientation>
    </subcellularLocation>
</comment>
<comment type="subcellular location">
    <molecule>Warthog protein 4 C-product</molecule>
    <subcellularLocation>
        <location evidence="1">Secreted</location>
        <location evidence="1">Extracellular space</location>
    </subcellularLocation>
    <text evidence="1">Also secreted in either cleaved or uncleaved form to mediate signaling to other cells.</text>
</comment>
<comment type="PTM">
    <text evidence="5">The C-terminal domain displays an autoproteolysis activity.</text>
</comment>
<comment type="similarity">
    <text evidence="6">Belongs to the hedgehog family.</text>
</comment>
<sequence>MRFSLLALVLLSSSYKFTYGSECGDSTIPYSLEVLSSGQPILGCARPTCFGWHSNGHQLPTNAKFFRIDQQSDGFLRDDPLAIHTFDAADPRVYAQQQASCEQEFQSLSCNPEDQWVGGIAPVMNASTTKIVAYKCCTYAPLRASIDRGVATVSGGQIVVGGEIFADNKPYAFDYISNVEKKIDSEGEIFYEVNIKRFSCLDLQKVDRSVPEILNSENTIRHVNGHRFVVHQAPTVDVETPVETGQLVVPQGVQNGQEVIIEEIVAQEGFVQETNPQPPPPPGQQGGFVQPQGFQPQGGFQPQGFQPQGFQPQAFQPQVVQNPVPAAPAGYAPMGFAPSGLQLYYCFPGDAMVNVYNGGFKRMDELAVGDWVQALDKNGSQVTFIPVQYWLHRDPKQVADFVEFTLDNGETFSLTEKHLVFVTQCSVPYSEDENINANPVPAERVNIGDCFYIAHRKKSQMYQRVKVLDINIVQKTGIYSPMTSRGHLLVDRIHASCHSETDNYSLQNTFFTNVLRWKSQIRNYFWTVEDSTNEDNIGYGLNGVMAVLDIVIPSKLM</sequence>
<organism evidence="7">
    <name type="scientific">Caenorhabditis elegans</name>
    <dbReference type="NCBI Taxonomy" id="6239"/>
    <lineage>
        <taxon>Eukaryota</taxon>
        <taxon>Metazoa</taxon>
        <taxon>Ecdysozoa</taxon>
        <taxon>Nematoda</taxon>
        <taxon>Chromadorea</taxon>
        <taxon>Rhabditida</taxon>
        <taxon>Rhabditina</taxon>
        <taxon>Rhabditomorpha</taxon>
        <taxon>Rhabditoidea</taxon>
        <taxon>Rhabditidae</taxon>
        <taxon>Peloderinae</taxon>
        <taxon>Caenorhabditis</taxon>
    </lineage>
</organism>
<protein>
    <recommendedName>
        <fullName>Warthog protein 4</fullName>
    </recommendedName>
    <alternativeName>
        <fullName>Protein M75</fullName>
    </alternativeName>
    <component>
        <recommendedName>
            <fullName>Warthog protein 4 N-product</fullName>
        </recommendedName>
    </component>
    <component>
        <recommendedName>
            <fullName>Warthog protein 4 C-product</fullName>
        </recommendedName>
    </component>
</protein>
<accession>Q94129</accession>
<accession>Q94410</accession>
<name>WRT4_CAEEL</name>
<evidence type="ECO:0000250" key="1"/>
<evidence type="ECO:0000250" key="2">
    <source>
        <dbReference type="UniProtKB" id="Q02936"/>
    </source>
</evidence>
<evidence type="ECO:0000255" key="3"/>
<evidence type="ECO:0000256" key="4">
    <source>
        <dbReference type="SAM" id="MobiDB-lite"/>
    </source>
</evidence>
<evidence type="ECO:0000269" key="5">
    <source>
    </source>
</evidence>
<evidence type="ECO:0000305" key="6"/>
<evidence type="ECO:0000312" key="7">
    <source>
        <dbReference type="EMBL" id="CAB01902.2"/>
    </source>
</evidence>
<dbReference type="EMBL" id="U61236">
    <property type="protein sequence ID" value="AAB17541.1"/>
    <property type="molecule type" value="mRNA"/>
</dbReference>
<dbReference type="EMBL" id="Z79605">
    <property type="protein sequence ID" value="CAB01902.2"/>
    <property type="molecule type" value="Genomic_DNA"/>
</dbReference>
<dbReference type="PIR" id="T27975">
    <property type="entry name" value="T27975"/>
</dbReference>
<dbReference type="RefSeq" id="NP_510593.1">
    <property type="nucleotide sequence ID" value="NM_078192.9"/>
</dbReference>
<dbReference type="SMR" id="Q94129"/>
<dbReference type="BioGRID" id="46556">
    <property type="interactions" value="3"/>
</dbReference>
<dbReference type="FunCoup" id="Q94129">
    <property type="interactions" value="138"/>
</dbReference>
<dbReference type="IntAct" id="Q94129">
    <property type="interactions" value="1"/>
</dbReference>
<dbReference type="STRING" id="6239.ZK678.5.1"/>
<dbReference type="MEROPS" id="C46.007"/>
<dbReference type="PaxDb" id="6239-ZK678.5"/>
<dbReference type="PeptideAtlas" id="Q94129"/>
<dbReference type="EnsemblMetazoa" id="ZK678.5.1">
    <property type="protein sequence ID" value="ZK678.5.1"/>
    <property type="gene ID" value="WBGene00006950"/>
</dbReference>
<dbReference type="GeneID" id="181664"/>
<dbReference type="KEGG" id="cel:CELE_ZK678.5"/>
<dbReference type="UCSC" id="ZK678.5.1">
    <property type="organism name" value="c. elegans"/>
</dbReference>
<dbReference type="AGR" id="WB:WBGene00006950"/>
<dbReference type="CTD" id="181664"/>
<dbReference type="WormBase" id="ZK678.5">
    <property type="protein sequence ID" value="CE24735"/>
    <property type="gene ID" value="WBGene00006950"/>
    <property type="gene designation" value="wrt-4"/>
</dbReference>
<dbReference type="eggNOG" id="KOG3638">
    <property type="taxonomic scope" value="Eukaryota"/>
</dbReference>
<dbReference type="GeneTree" id="ENSGT00970000196193"/>
<dbReference type="HOGENOM" id="CLU_034413_0_0_1"/>
<dbReference type="InParanoid" id="Q94129"/>
<dbReference type="OMA" id="TAKFFRI"/>
<dbReference type="OrthoDB" id="5212at2759"/>
<dbReference type="PhylomeDB" id="Q94129"/>
<dbReference type="PRO" id="PR:Q94129"/>
<dbReference type="Proteomes" id="UP000001940">
    <property type="component" value="Chromosome X"/>
</dbReference>
<dbReference type="Bgee" id="WBGene00006950">
    <property type="expression patterns" value="Expressed in larva and 4 other cell types or tissues"/>
</dbReference>
<dbReference type="GO" id="GO:0009986">
    <property type="term" value="C:cell surface"/>
    <property type="evidence" value="ECO:0007669"/>
    <property type="project" value="UniProtKB-SubCell"/>
</dbReference>
<dbReference type="GO" id="GO:0031012">
    <property type="term" value="C:extracellular matrix"/>
    <property type="evidence" value="ECO:0000318"/>
    <property type="project" value="GO_Central"/>
</dbReference>
<dbReference type="GO" id="GO:0005576">
    <property type="term" value="C:extracellular region"/>
    <property type="evidence" value="ECO:0000303"/>
    <property type="project" value="UniProtKB"/>
</dbReference>
<dbReference type="GO" id="GO:0005886">
    <property type="term" value="C:plasma membrane"/>
    <property type="evidence" value="ECO:0000303"/>
    <property type="project" value="UniProtKB"/>
</dbReference>
<dbReference type="GO" id="GO:0008233">
    <property type="term" value="F:peptidase activity"/>
    <property type="evidence" value="ECO:0007669"/>
    <property type="project" value="UniProtKB-KW"/>
</dbReference>
<dbReference type="GO" id="GO:0007267">
    <property type="term" value="P:cell-cell signaling"/>
    <property type="evidence" value="ECO:0000303"/>
    <property type="project" value="UniProtKB"/>
</dbReference>
<dbReference type="GO" id="GO:0016539">
    <property type="term" value="P:intein-mediated protein splicing"/>
    <property type="evidence" value="ECO:0007669"/>
    <property type="project" value="InterPro"/>
</dbReference>
<dbReference type="GO" id="GO:0090597">
    <property type="term" value="P:nematode male tail mating organ morphogenesis"/>
    <property type="evidence" value="ECO:0000315"/>
    <property type="project" value="WormBase"/>
</dbReference>
<dbReference type="GO" id="GO:0016540">
    <property type="term" value="P:protein autoprocessing"/>
    <property type="evidence" value="ECO:0000303"/>
    <property type="project" value="UniProtKB"/>
</dbReference>
<dbReference type="GO" id="GO:0007367">
    <property type="term" value="P:segment polarity determination"/>
    <property type="evidence" value="ECO:0000303"/>
    <property type="project" value="UniProtKB"/>
</dbReference>
<dbReference type="CDD" id="cd00081">
    <property type="entry name" value="Hint"/>
    <property type="match status" value="1"/>
</dbReference>
<dbReference type="Gene3D" id="2.170.16.10">
    <property type="entry name" value="Hedgehog/Intein (Hint) domain"/>
    <property type="match status" value="1"/>
</dbReference>
<dbReference type="InterPro" id="IPR052140">
    <property type="entry name" value="Dev_Signal_Hedgehog-like"/>
</dbReference>
<dbReference type="InterPro" id="IPR001657">
    <property type="entry name" value="Hedgehog"/>
</dbReference>
<dbReference type="InterPro" id="IPR001767">
    <property type="entry name" value="Hedgehog_Hint"/>
</dbReference>
<dbReference type="InterPro" id="IPR003586">
    <property type="entry name" value="Hint_dom_C"/>
</dbReference>
<dbReference type="InterPro" id="IPR003587">
    <property type="entry name" value="Hint_dom_N"/>
</dbReference>
<dbReference type="InterPro" id="IPR036844">
    <property type="entry name" value="Hint_dom_sf"/>
</dbReference>
<dbReference type="InterPro" id="IPR006141">
    <property type="entry name" value="Intein_N"/>
</dbReference>
<dbReference type="PANTHER" id="PTHR46706">
    <property type="entry name" value="PROTEIN QUA-1-RELATED"/>
    <property type="match status" value="1"/>
</dbReference>
<dbReference type="PANTHER" id="PTHR46706:SF12">
    <property type="entry name" value="PROTEIN QUA-1-RELATED"/>
    <property type="match status" value="1"/>
</dbReference>
<dbReference type="Pfam" id="PF01079">
    <property type="entry name" value="Hint"/>
    <property type="match status" value="1"/>
</dbReference>
<dbReference type="PRINTS" id="PR00632">
    <property type="entry name" value="SONICHHOG"/>
</dbReference>
<dbReference type="SMART" id="SM00305">
    <property type="entry name" value="HintC"/>
    <property type="match status" value="1"/>
</dbReference>
<dbReference type="SMART" id="SM00306">
    <property type="entry name" value="HintN"/>
    <property type="match status" value="1"/>
</dbReference>
<dbReference type="SUPFAM" id="SSF51294">
    <property type="entry name" value="Hedgehog/intein (Hint) domain"/>
    <property type="match status" value="1"/>
</dbReference>
<dbReference type="PROSITE" id="PS50817">
    <property type="entry name" value="INTEIN_N_TER"/>
    <property type="match status" value="1"/>
</dbReference>
<reference evidence="6" key="1">
    <citation type="journal article" date="1996" name="Cell">
        <title>Hedgehog patterning activity: role of a lipophilic modification mediated by the carboxy-terminal autoprocessing domain.</title>
        <authorList>
            <person name="Porter J.A."/>
            <person name="Ekker S.C."/>
            <person name="Park W.-J."/>
            <person name="von Kessler D.P."/>
            <person name="Young K.E."/>
            <person name="Chen C.-H."/>
            <person name="Ma Y."/>
            <person name="Woods A.S."/>
            <person name="Cotter R.J."/>
            <person name="Koonin E.V."/>
            <person name="Beachy P.A."/>
        </authorList>
    </citation>
    <scope>NUCLEOTIDE SEQUENCE [MRNA]</scope>
    <source>
        <strain>Bristol N2</strain>
    </source>
</reference>
<reference key="2">
    <citation type="journal article" date="1998" name="Science">
        <title>Genome sequence of the nematode C. elegans: a platform for investigating biology.</title>
        <authorList>
            <consortium name="The C. elegans sequencing consortium"/>
        </authorList>
    </citation>
    <scope>NUCLEOTIDE SEQUENCE [LARGE SCALE GENOMIC DNA]</scope>
    <source>
        <strain>Bristol N2</strain>
    </source>
</reference>
<keyword id="KW-0068">Autocatalytic cleavage</keyword>
<keyword id="KW-1003">Cell membrane</keyword>
<keyword id="KW-0217">Developmental protein</keyword>
<keyword id="KW-0378">Hydrolase</keyword>
<keyword id="KW-0472">Membrane</keyword>
<keyword id="KW-0645">Protease</keyword>
<keyword id="KW-1185">Reference proteome</keyword>
<keyword id="KW-0964">Secreted</keyword>
<keyword id="KW-0732">Signal</keyword>
<feature type="signal peptide" evidence="3">
    <location>
        <begin position="1"/>
        <end position="20"/>
    </location>
</feature>
<feature type="chain" id="PRO_0000013262" description="Warthog protein 4">
    <location>
        <begin position="21"/>
        <end position="557"/>
    </location>
</feature>
<feature type="chain" id="PRO_0000013263" description="Warthog protein 4 N-product" evidence="1">
    <location>
        <begin position="21"/>
        <end position="346"/>
    </location>
</feature>
<feature type="chain" id="PRO_0000013264" description="Warthog protein 4 C-product" evidence="1">
    <location>
        <begin position="347"/>
        <end position="557"/>
    </location>
</feature>
<feature type="region of interest" description="Disordered" evidence="4">
    <location>
        <begin position="272"/>
        <end position="308"/>
    </location>
</feature>
<feature type="compositionally biased region" description="Low complexity" evidence="4">
    <location>
        <begin position="287"/>
        <end position="308"/>
    </location>
</feature>
<feature type="site" description="Cleavage; by autolysis" evidence="2">
    <location>
        <begin position="345"/>
        <end position="346"/>
    </location>
</feature>
<feature type="site" description="Involved in auto-cleavage" evidence="1">
    <location>
        <position position="415"/>
    </location>
</feature>
<feature type="site" description="Essential for auto-cleavage" evidence="2">
    <location>
        <position position="418"/>
    </location>
</feature>
<feature type="sequence conflict" description="In Ref. 1; AAB17541." evidence="6" ref="1">
    <original>H</original>
    <variation>N</variation>
    <location>
        <position position="53"/>
    </location>
</feature>
<proteinExistence type="evidence at transcript level"/>